<protein>
    <recommendedName>
        <fullName evidence="1">Putative HTH-type transcriptional regulatory protein YG5714_1269</fullName>
    </recommendedName>
</protein>
<dbReference type="EMBL" id="CP001403">
    <property type="protein sequence ID" value="ACP45535.1"/>
    <property type="molecule type" value="Genomic_DNA"/>
</dbReference>
<dbReference type="RefSeq" id="WP_012716132.1">
    <property type="nucleotide sequence ID" value="NC_012622.1"/>
</dbReference>
<dbReference type="SMR" id="C3NDZ6"/>
<dbReference type="GeneID" id="7807495"/>
<dbReference type="KEGG" id="siy:YG5714_1269"/>
<dbReference type="HOGENOM" id="CLU_075726_1_0_2"/>
<dbReference type="Proteomes" id="UP000002308">
    <property type="component" value="Chromosome"/>
</dbReference>
<dbReference type="GO" id="GO:0003677">
    <property type="term" value="F:DNA binding"/>
    <property type="evidence" value="ECO:0007669"/>
    <property type="project" value="UniProtKB-KW"/>
</dbReference>
<dbReference type="GO" id="GO:0003700">
    <property type="term" value="F:DNA-binding transcription factor activity"/>
    <property type="evidence" value="ECO:0007669"/>
    <property type="project" value="UniProtKB-UniRule"/>
</dbReference>
<dbReference type="CDD" id="cd00093">
    <property type="entry name" value="HTH_XRE"/>
    <property type="match status" value="1"/>
</dbReference>
<dbReference type="Gene3D" id="1.10.260.40">
    <property type="entry name" value="lambda repressor-like DNA-binding domains"/>
    <property type="match status" value="1"/>
</dbReference>
<dbReference type="HAMAP" id="MF_00584">
    <property type="entry name" value="HTH_type_cro_C1"/>
    <property type="match status" value="1"/>
</dbReference>
<dbReference type="InterPro" id="IPR020886">
    <property type="entry name" value="Arc_TR_HTH"/>
</dbReference>
<dbReference type="InterPro" id="IPR001387">
    <property type="entry name" value="Cro/C1-type_HTH"/>
</dbReference>
<dbReference type="InterPro" id="IPR010982">
    <property type="entry name" value="Lambda_DNA-bd_dom_sf"/>
</dbReference>
<dbReference type="Pfam" id="PF01381">
    <property type="entry name" value="HTH_3"/>
    <property type="match status" value="1"/>
</dbReference>
<dbReference type="SMART" id="SM00530">
    <property type="entry name" value="HTH_XRE"/>
    <property type="match status" value="1"/>
</dbReference>
<dbReference type="SUPFAM" id="SSF47413">
    <property type="entry name" value="lambda repressor-like DNA-binding domains"/>
    <property type="match status" value="1"/>
</dbReference>
<dbReference type="PROSITE" id="PS50943">
    <property type="entry name" value="HTH_CROC1"/>
    <property type="match status" value="1"/>
</dbReference>
<gene>
    <name type="ordered locus">YG5714_1269</name>
</gene>
<accession>C3NDZ6</accession>
<name>Y1269_SACI7</name>
<sequence length="310" mass="35574">MSKKIINEVIDILEDKKYTYTMIEYPEHNRKSVDIVLNSKEPTLIRVSEDKVTKEEISDLKKIAVSTLTASLVVTNEEEEDIVSVKADNVFAVSPEGFKKVINGEKIFLYRTRGGIFIKIRNYILKHKREEMGYSIGDVAKFLGVSRKAIYDYEKGDSDVSLEVAEKLIDLFGDDIIGDVIWDSIKGKKEVIEEDITEFSPESFKSKLIYKLKENGLNILSLKLTAADLIVKDNENNRYLVTIENKDYNKSMKKFYEAKKLSSYTKSELLIIIRTSKMLKECEDLGYKTYEENDIHSLIDEIKGSNGRQS</sequence>
<keyword id="KW-0238">DNA-binding</keyword>
<keyword id="KW-0804">Transcription</keyword>
<keyword id="KW-0805">Transcription regulation</keyword>
<proteinExistence type="inferred from homology"/>
<organism>
    <name type="scientific">Saccharolobus islandicus (strain Y.G.57.14 / Yellowstone #1)</name>
    <name type="common">Sulfolobus islandicus</name>
    <dbReference type="NCBI Taxonomy" id="439386"/>
    <lineage>
        <taxon>Archaea</taxon>
        <taxon>Thermoproteota</taxon>
        <taxon>Thermoprotei</taxon>
        <taxon>Sulfolobales</taxon>
        <taxon>Sulfolobaceae</taxon>
        <taxon>Saccharolobus</taxon>
    </lineage>
</organism>
<reference key="1">
    <citation type="journal article" date="2009" name="Proc. Natl. Acad. Sci. U.S.A.">
        <title>Biogeography of the Sulfolobus islandicus pan-genome.</title>
        <authorList>
            <person name="Reno M.L."/>
            <person name="Held N.L."/>
            <person name="Fields C.J."/>
            <person name="Burke P.V."/>
            <person name="Whitaker R.J."/>
        </authorList>
    </citation>
    <scope>NUCLEOTIDE SEQUENCE [LARGE SCALE GENOMIC DNA]</scope>
    <source>
        <strain>Y.G.57.14 / Yellowstone #1</strain>
    </source>
</reference>
<evidence type="ECO:0000255" key="1">
    <source>
        <dbReference type="HAMAP-Rule" id="MF_00584"/>
    </source>
</evidence>
<feature type="chain" id="PRO_1000212147" description="Putative HTH-type transcriptional regulatory protein YG5714_1269">
    <location>
        <begin position="1"/>
        <end position="310"/>
    </location>
</feature>
<feature type="domain" description="HTH cro/C1-type" evidence="1">
    <location>
        <begin position="125"/>
        <end position="180"/>
    </location>
</feature>
<feature type="DNA-binding region" description="H-T-H motif" evidence="1">
    <location>
        <begin position="136"/>
        <end position="155"/>
    </location>
</feature>